<feature type="chain" id="PRO_0000079272" description="Spore coat protein X">
    <location>
        <begin position="1"/>
        <end position="172"/>
    </location>
</feature>
<keyword id="KW-0903">Direct protein sequencing</keyword>
<keyword id="KW-1185">Reference proteome</keyword>
<keyword id="KW-0749">Sporulation</keyword>
<reference key="1">
    <citation type="journal article" date="1993" name="J. Bacteriol.">
        <title>Cloning and characterization of a cluster of genes encoding polypeptides present in the insoluble fraction of the spore coat of Bacillus subtilis.</title>
        <authorList>
            <person name="Zhang J."/>
            <person name="Fitz-James P.C."/>
            <person name="Aronson A.I."/>
        </authorList>
    </citation>
    <scope>NUCLEOTIDE SEQUENCE [GENOMIC DNA]</scope>
    <scope>PROTEIN SEQUENCE OF 1-12</scope>
    <scope>SUBCELLULAR LOCATION</scope>
    <source>
        <strain>168 / JH642</strain>
    </source>
</reference>
<reference key="2">
    <citation type="journal article" date="1997" name="Nature">
        <title>The complete genome sequence of the Gram-positive bacterium Bacillus subtilis.</title>
        <authorList>
            <person name="Kunst F."/>
            <person name="Ogasawara N."/>
            <person name="Moszer I."/>
            <person name="Albertini A.M."/>
            <person name="Alloni G."/>
            <person name="Azevedo V."/>
            <person name="Bertero M.G."/>
            <person name="Bessieres P."/>
            <person name="Bolotin A."/>
            <person name="Borchert S."/>
            <person name="Borriss R."/>
            <person name="Boursier L."/>
            <person name="Brans A."/>
            <person name="Braun M."/>
            <person name="Brignell S.C."/>
            <person name="Bron S."/>
            <person name="Brouillet S."/>
            <person name="Bruschi C.V."/>
            <person name="Caldwell B."/>
            <person name="Capuano V."/>
            <person name="Carter N.M."/>
            <person name="Choi S.-K."/>
            <person name="Codani J.-J."/>
            <person name="Connerton I.F."/>
            <person name="Cummings N.J."/>
            <person name="Daniel R.A."/>
            <person name="Denizot F."/>
            <person name="Devine K.M."/>
            <person name="Duesterhoeft A."/>
            <person name="Ehrlich S.D."/>
            <person name="Emmerson P.T."/>
            <person name="Entian K.-D."/>
            <person name="Errington J."/>
            <person name="Fabret C."/>
            <person name="Ferrari E."/>
            <person name="Foulger D."/>
            <person name="Fritz C."/>
            <person name="Fujita M."/>
            <person name="Fujita Y."/>
            <person name="Fuma S."/>
            <person name="Galizzi A."/>
            <person name="Galleron N."/>
            <person name="Ghim S.-Y."/>
            <person name="Glaser P."/>
            <person name="Goffeau A."/>
            <person name="Golightly E.J."/>
            <person name="Grandi G."/>
            <person name="Guiseppi G."/>
            <person name="Guy B.J."/>
            <person name="Haga K."/>
            <person name="Haiech J."/>
            <person name="Harwood C.R."/>
            <person name="Henaut A."/>
            <person name="Hilbert H."/>
            <person name="Holsappel S."/>
            <person name="Hosono S."/>
            <person name="Hullo M.-F."/>
            <person name="Itaya M."/>
            <person name="Jones L.-M."/>
            <person name="Joris B."/>
            <person name="Karamata D."/>
            <person name="Kasahara Y."/>
            <person name="Klaerr-Blanchard M."/>
            <person name="Klein C."/>
            <person name="Kobayashi Y."/>
            <person name="Koetter P."/>
            <person name="Koningstein G."/>
            <person name="Krogh S."/>
            <person name="Kumano M."/>
            <person name="Kurita K."/>
            <person name="Lapidus A."/>
            <person name="Lardinois S."/>
            <person name="Lauber J."/>
            <person name="Lazarevic V."/>
            <person name="Lee S.-M."/>
            <person name="Levine A."/>
            <person name="Liu H."/>
            <person name="Masuda S."/>
            <person name="Mauel C."/>
            <person name="Medigue C."/>
            <person name="Medina N."/>
            <person name="Mellado R.P."/>
            <person name="Mizuno M."/>
            <person name="Moestl D."/>
            <person name="Nakai S."/>
            <person name="Noback M."/>
            <person name="Noone D."/>
            <person name="O'Reilly M."/>
            <person name="Ogawa K."/>
            <person name="Ogiwara A."/>
            <person name="Oudega B."/>
            <person name="Park S.-H."/>
            <person name="Parro V."/>
            <person name="Pohl T.M."/>
            <person name="Portetelle D."/>
            <person name="Porwollik S."/>
            <person name="Prescott A.M."/>
            <person name="Presecan E."/>
            <person name="Pujic P."/>
            <person name="Purnelle B."/>
            <person name="Rapoport G."/>
            <person name="Rey M."/>
            <person name="Reynolds S."/>
            <person name="Rieger M."/>
            <person name="Rivolta C."/>
            <person name="Rocha E."/>
            <person name="Roche B."/>
            <person name="Rose M."/>
            <person name="Sadaie Y."/>
            <person name="Sato T."/>
            <person name="Scanlan E."/>
            <person name="Schleich S."/>
            <person name="Schroeter R."/>
            <person name="Scoffone F."/>
            <person name="Sekiguchi J."/>
            <person name="Sekowska A."/>
            <person name="Seror S.J."/>
            <person name="Serror P."/>
            <person name="Shin B.-S."/>
            <person name="Soldo B."/>
            <person name="Sorokin A."/>
            <person name="Tacconi E."/>
            <person name="Takagi T."/>
            <person name="Takahashi H."/>
            <person name="Takemaru K."/>
            <person name="Takeuchi M."/>
            <person name="Tamakoshi A."/>
            <person name="Tanaka T."/>
            <person name="Terpstra P."/>
            <person name="Tognoni A."/>
            <person name="Tosato V."/>
            <person name="Uchiyama S."/>
            <person name="Vandenbol M."/>
            <person name="Vannier F."/>
            <person name="Vassarotti A."/>
            <person name="Viari A."/>
            <person name="Wambutt R."/>
            <person name="Wedler E."/>
            <person name="Wedler H."/>
            <person name="Weitzenegger T."/>
            <person name="Winters P."/>
            <person name="Wipat A."/>
            <person name="Yamamoto H."/>
            <person name="Yamane K."/>
            <person name="Yasumoto K."/>
            <person name="Yata K."/>
            <person name="Yoshida K."/>
            <person name="Yoshikawa H.-F."/>
            <person name="Zumstein E."/>
            <person name="Yoshikawa H."/>
            <person name="Danchin A."/>
        </authorList>
    </citation>
    <scope>NUCLEOTIDE SEQUENCE [LARGE SCALE GENOMIC DNA]</scope>
    <source>
        <strain>168</strain>
    </source>
</reference>
<sequence>MESRPYSWVALDPDCDHPLDDKEKDKEKHERKCHCDVCCNGNGFFGNDNAFIDQDLAQANLNKQVSDETIIIRDSCDINVTSTDVQAVTSVVTALNAAVVTATLTSIADGVIAELVAQDLLQLTANKQVNRQKLLIECSRGVNVTTVDADIATLISTATNTLVAILVITLVL</sequence>
<protein>
    <recommendedName>
        <fullName>Spore coat protein X</fullName>
    </recommendedName>
</protein>
<dbReference type="EMBL" id="L10116">
    <property type="protein sequence ID" value="AAA22327.1"/>
    <property type="molecule type" value="Genomic_DNA"/>
</dbReference>
<dbReference type="EMBL" id="AL009126">
    <property type="protein sequence ID" value="CAB13033.1"/>
    <property type="molecule type" value="Genomic_DNA"/>
</dbReference>
<dbReference type="PIR" id="C47119">
    <property type="entry name" value="C47119"/>
</dbReference>
<dbReference type="RefSeq" id="NP_389058.1">
    <property type="nucleotide sequence ID" value="NC_000964.3"/>
</dbReference>
<dbReference type="RefSeq" id="WP_003244668.1">
    <property type="nucleotide sequence ID" value="NZ_OZ025638.1"/>
</dbReference>
<dbReference type="FunCoup" id="Q08313">
    <property type="interactions" value="113"/>
</dbReference>
<dbReference type="STRING" id="224308.BSU11760"/>
<dbReference type="PaxDb" id="224308-BSU11760"/>
<dbReference type="DNASU" id="936417"/>
<dbReference type="EnsemblBacteria" id="CAB13033">
    <property type="protein sequence ID" value="CAB13033"/>
    <property type="gene ID" value="BSU_11760"/>
</dbReference>
<dbReference type="GeneID" id="936417"/>
<dbReference type="KEGG" id="bsu:BSU11760"/>
<dbReference type="PATRIC" id="fig|224308.179.peg.1265"/>
<dbReference type="eggNOG" id="ENOG5032S2K">
    <property type="taxonomic scope" value="Bacteria"/>
</dbReference>
<dbReference type="InParanoid" id="Q08313"/>
<dbReference type="OrthoDB" id="2376847at2"/>
<dbReference type="BioCyc" id="BSUB:BSU11760-MONOMER"/>
<dbReference type="Proteomes" id="UP000001570">
    <property type="component" value="Chromosome"/>
</dbReference>
<dbReference type="GO" id="GO:0031160">
    <property type="term" value="C:spore wall"/>
    <property type="evidence" value="ECO:0007669"/>
    <property type="project" value="InterPro"/>
</dbReference>
<dbReference type="GO" id="GO:0030435">
    <property type="term" value="P:sporulation resulting in formation of a cellular spore"/>
    <property type="evidence" value="ECO:0007669"/>
    <property type="project" value="UniProtKB-KW"/>
</dbReference>
<dbReference type="InterPro" id="IPR011428">
    <property type="entry name" value="Spore_coat_X/V"/>
</dbReference>
<dbReference type="Pfam" id="PF07552">
    <property type="entry name" value="Coat_X"/>
    <property type="match status" value="2"/>
</dbReference>
<comment type="subcellular location">
    <subcellularLocation>
        <location evidence="1">Spore coat</location>
    </subcellularLocation>
    <text>Outer coat.</text>
</comment>
<proteinExistence type="evidence at protein level"/>
<evidence type="ECO:0000269" key="1">
    <source>
    </source>
</evidence>
<name>COTX_BACSU</name>
<accession>Q08313</accession>
<organism>
    <name type="scientific">Bacillus subtilis (strain 168)</name>
    <dbReference type="NCBI Taxonomy" id="224308"/>
    <lineage>
        <taxon>Bacteria</taxon>
        <taxon>Bacillati</taxon>
        <taxon>Bacillota</taxon>
        <taxon>Bacilli</taxon>
        <taxon>Bacillales</taxon>
        <taxon>Bacillaceae</taxon>
        <taxon>Bacillus</taxon>
    </lineage>
</organism>
<gene>
    <name type="primary">cotX</name>
    <name type="ordered locus">BSU11760</name>
</gene>